<feature type="chain" id="PRO_1000141090" description="Small ribosomal subunit protein uS11">
    <location>
        <begin position="1"/>
        <end position="129"/>
    </location>
</feature>
<dbReference type="EMBL" id="CU928160">
    <property type="protein sequence ID" value="CAR00249.1"/>
    <property type="molecule type" value="Genomic_DNA"/>
</dbReference>
<dbReference type="RefSeq" id="WP_001029684.1">
    <property type="nucleotide sequence ID" value="NC_011741.1"/>
</dbReference>
<dbReference type="SMR" id="B7M103"/>
<dbReference type="GeneID" id="93778690"/>
<dbReference type="KEGG" id="ecr:ECIAI1_3447"/>
<dbReference type="HOGENOM" id="CLU_072439_5_0_6"/>
<dbReference type="GO" id="GO:1990904">
    <property type="term" value="C:ribonucleoprotein complex"/>
    <property type="evidence" value="ECO:0007669"/>
    <property type="project" value="UniProtKB-KW"/>
</dbReference>
<dbReference type="GO" id="GO:0005840">
    <property type="term" value="C:ribosome"/>
    <property type="evidence" value="ECO:0007669"/>
    <property type="project" value="UniProtKB-KW"/>
</dbReference>
<dbReference type="GO" id="GO:0019843">
    <property type="term" value="F:rRNA binding"/>
    <property type="evidence" value="ECO:0007669"/>
    <property type="project" value="UniProtKB-UniRule"/>
</dbReference>
<dbReference type="GO" id="GO:0003735">
    <property type="term" value="F:structural constituent of ribosome"/>
    <property type="evidence" value="ECO:0007669"/>
    <property type="project" value="InterPro"/>
</dbReference>
<dbReference type="GO" id="GO:0006412">
    <property type="term" value="P:translation"/>
    <property type="evidence" value="ECO:0007669"/>
    <property type="project" value="UniProtKB-UniRule"/>
</dbReference>
<dbReference type="FunFam" id="3.30.420.80:FF:000001">
    <property type="entry name" value="30S ribosomal protein S11"/>
    <property type="match status" value="1"/>
</dbReference>
<dbReference type="Gene3D" id="3.30.420.80">
    <property type="entry name" value="Ribosomal protein S11"/>
    <property type="match status" value="1"/>
</dbReference>
<dbReference type="HAMAP" id="MF_01310">
    <property type="entry name" value="Ribosomal_uS11"/>
    <property type="match status" value="1"/>
</dbReference>
<dbReference type="InterPro" id="IPR001971">
    <property type="entry name" value="Ribosomal_uS11"/>
</dbReference>
<dbReference type="InterPro" id="IPR019981">
    <property type="entry name" value="Ribosomal_uS11_bac-type"/>
</dbReference>
<dbReference type="InterPro" id="IPR018102">
    <property type="entry name" value="Ribosomal_uS11_CS"/>
</dbReference>
<dbReference type="InterPro" id="IPR036967">
    <property type="entry name" value="Ribosomal_uS11_sf"/>
</dbReference>
<dbReference type="NCBIfam" id="NF003698">
    <property type="entry name" value="PRK05309.1"/>
    <property type="match status" value="1"/>
</dbReference>
<dbReference type="NCBIfam" id="TIGR03632">
    <property type="entry name" value="uS11_bact"/>
    <property type="match status" value="1"/>
</dbReference>
<dbReference type="PANTHER" id="PTHR11759">
    <property type="entry name" value="40S RIBOSOMAL PROTEIN S14/30S RIBOSOMAL PROTEIN S11"/>
    <property type="match status" value="1"/>
</dbReference>
<dbReference type="Pfam" id="PF00411">
    <property type="entry name" value="Ribosomal_S11"/>
    <property type="match status" value="1"/>
</dbReference>
<dbReference type="PIRSF" id="PIRSF002131">
    <property type="entry name" value="Ribosomal_S11"/>
    <property type="match status" value="1"/>
</dbReference>
<dbReference type="SUPFAM" id="SSF53137">
    <property type="entry name" value="Translational machinery components"/>
    <property type="match status" value="1"/>
</dbReference>
<dbReference type="PROSITE" id="PS00054">
    <property type="entry name" value="RIBOSOMAL_S11"/>
    <property type="match status" value="1"/>
</dbReference>
<organism>
    <name type="scientific">Escherichia coli O8 (strain IAI1)</name>
    <dbReference type="NCBI Taxonomy" id="585034"/>
    <lineage>
        <taxon>Bacteria</taxon>
        <taxon>Pseudomonadati</taxon>
        <taxon>Pseudomonadota</taxon>
        <taxon>Gammaproteobacteria</taxon>
        <taxon>Enterobacterales</taxon>
        <taxon>Enterobacteriaceae</taxon>
        <taxon>Escherichia</taxon>
    </lineage>
</organism>
<gene>
    <name evidence="1" type="primary">rpsK</name>
    <name type="ordered locus">ECIAI1_3447</name>
</gene>
<reference key="1">
    <citation type="journal article" date="2009" name="PLoS Genet.">
        <title>Organised genome dynamics in the Escherichia coli species results in highly diverse adaptive paths.</title>
        <authorList>
            <person name="Touchon M."/>
            <person name="Hoede C."/>
            <person name="Tenaillon O."/>
            <person name="Barbe V."/>
            <person name="Baeriswyl S."/>
            <person name="Bidet P."/>
            <person name="Bingen E."/>
            <person name="Bonacorsi S."/>
            <person name="Bouchier C."/>
            <person name="Bouvet O."/>
            <person name="Calteau A."/>
            <person name="Chiapello H."/>
            <person name="Clermont O."/>
            <person name="Cruveiller S."/>
            <person name="Danchin A."/>
            <person name="Diard M."/>
            <person name="Dossat C."/>
            <person name="Karoui M.E."/>
            <person name="Frapy E."/>
            <person name="Garry L."/>
            <person name="Ghigo J.M."/>
            <person name="Gilles A.M."/>
            <person name="Johnson J."/>
            <person name="Le Bouguenec C."/>
            <person name="Lescat M."/>
            <person name="Mangenot S."/>
            <person name="Martinez-Jehanne V."/>
            <person name="Matic I."/>
            <person name="Nassif X."/>
            <person name="Oztas S."/>
            <person name="Petit M.A."/>
            <person name="Pichon C."/>
            <person name="Rouy Z."/>
            <person name="Ruf C.S."/>
            <person name="Schneider D."/>
            <person name="Tourret J."/>
            <person name="Vacherie B."/>
            <person name="Vallenet D."/>
            <person name="Medigue C."/>
            <person name="Rocha E.P.C."/>
            <person name="Denamur E."/>
        </authorList>
    </citation>
    <scope>NUCLEOTIDE SEQUENCE [LARGE SCALE GENOMIC DNA]</scope>
    <source>
        <strain>IAI1</strain>
    </source>
</reference>
<protein>
    <recommendedName>
        <fullName evidence="1">Small ribosomal subunit protein uS11</fullName>
    </recommendedName>
    <alternativeName>
        <fullName evidence="2">30S ribosomal protein S11</fullName>
    </alternativeName>
</protein>
<keyword id="KW-0687">Ribonucleoprotein</keyword>
<keyword id="KW-0689">Ribosomal protein</keyword>
<keyword id="KW-0694">RNA-binding</keyword>
<keyword id="KW-0699">rRNA-binding</keyword>
<evidence type="ECO:0000255" key="1">
    <source>
        <dbReference type="HAMAP-Rule" id="MF_01310"/>
    </source>
</evidence>
<evidence type="ECO:0000305" key="2"/>
<accession>B7M103</accession>
<comment type="function">
    <text evidence="1">Located on the platform of the 30S subunit, it bridges several disparate RNA helices of the 16S rRNA. Forms part of the Shine-Dalgarno cleft in the 70S ribosome.</text>
</comment>
<comment type="subunit">
    <text evidence="1">Part of the 30S ribosomal subunit. Interacts with proteins S7 and S18. Binds to IF-3.</text>
</comment>
<comment type="similarity">
    <text evidence="1">Belongs to the universal ribosomal protein uS11 family.</text>
</comment>
<name>RS11_ECO8A</name>
<sequence>MAKAPIRARKRVRKQVSDGVAHIHASFNNTIVTITDRQGNALGWATAGGSGFRGSRKSTPFAAQVAAERCADAVKEYGIKNLEVMVKGPGPGRESTIRALNAAGFRITNITDVTPIPHNGCRPPKKRRV</sequence>
<proteinExistence type="inferred from homology"/>